<reference key="1">
    <citation type="submission" date="2009-03" db="EMBL/GenBank/DDBJ databases">
        <title>Complete genome sequence of Edwardsiella ictaluri 93-146.</title>
        <authorList>
            <person name="Williams M.L."/>
            <person name="Gillaspy A.F."/>
            <person name="Dyer D.W."/>
            <person name="Thune R.L."/>
            <person name="Waldbieser G.C."/>
            <person name="Schuster S.C."/>
            <person name="Gipson J."/>
            <person name="Zaitshik J."/>
            <person name="Landry C."/>
            <person name="Lawrence M.L."/>
        </authorList>
    </citation>
    <scope>NUCLEOTIDE SEQUENCE [LARGE SCALE GENOMIC DNA]</scope>
    <source>
        <strain>93-146</strain>
    </source>
</reference>
<keyword id="KW-0687">Ribonucleoprotein</keyword>
<keyword id="KW-0689">Ribosomal protein</keyword>
<proteinExistence type="inferred from homology"/>
<gene>
    <name evidence="1" type="primary">rpmF</name>
    <name type="ordered locus">NT01EI_2373</name>
</gene>
<feature type="chain" id="PRO_1000205261" description="Large ribosomal subunit protein bL32">
    <location>
        <begin position="1"/>
        <end position="56"/>
    </location>
</feature>
<dbReference type="EMBL" id="CP001600">
    <property type="protein sequence ID" value="ACR69544.1"/>
    <property type="molecule type" value="Genomic_DNA"/>
</dbReference>
<dbReference type="RefSeq" id="WP_005287307.1">
    <property type="nucleotide sequence ID" value="NZ_CP169062.1"/>
</dbReference>
<dbReference type="SMR" id="C5BA64"/>
<dbReference type="STRING" id="67780.B6E78_04085"/>
<dbReference type="GeneID" id="93124482"/>
<dbReference type="KEGG" id="eic:NT01EI_2373"/>
<dbReference type="HOGENOM" id="CLU_129084_2_1_6"/>
<dbReference type="OrthoDB" id="9801927at2"/>
<dbReference type="Proteomes" id="UP000001485">
    <property type="component" value="Chromosome"/>
</dbReference>
<dbReference type="GO" id="GO:0015934">
    <property type="term" value="C:large ribosomal subunit"/>
    <property type="evidence" value="ECO:0007669"/>
    <property type="project" value="InterPro"/>
</dbReference>
<dbReference type="GO" id="GO:0003735">
    <property type="term" value="F:structural constituent of ribosome"/>
    <property type="evidence" value="ECO:0007669"/>
    <property type="project" value="InterPro"/>
</dbReference>
<dbReference type="GO" id="GO:0006412">
    <property type="term" value="P:translation"/>
    <property type="evidence" value="ECO:0007669"/>
    <property type="project" value="UniProtKB-UniRule"/>
</dbReference>
<dbReference type="HAMAP" id="MF_00340">
    <property type="entry name" value="Ribosomal_bL32"/>
    <property type="match status" value="1"/>
</dbReference>
<dbReference type="InterPro" id="IPR002677">
    <property type="entry name" value="Ribosomal_bL32"/>
</dbReference>
<dbReference type="InterPro" id="IPR044957">
    <property type="entry name" value="Ribosomal_bL32_bact"/>
</dbReference>
<dbReference type="InterPro" id="IPR011332">
    <property type="entry name" value="Ribosomal_zn-bd"/>
</dbReference>
<dbReference type="NCBIfam" id="TIGR01031">
    <property type="entry name" value="rpmF_bact"/>
    <property type="match status" value="1"/>
</dbReference>
<dbReference type="PANTHER" id="PTHR35534">
    <property type="entry name" value="50S RIBOSOMAL PROTEIN L32"/>
    <property type="match status" value="1"/>
</dbReference>
<dbReference type="PANTHER" id="PTHR35534:SF1">
    <property type="entry name" value="LARGE RIBOSOMAL SUBUNIT PROTEIN BL32"/>
    <property type="match status" value="1"/>
</dbReference>
<dbReference type="Pfam" id="PF01783">
    <property type="entry name" value="Ribosomal_L32p"/>
    <property type="match status" value="1"/>
</dbReference>
<dbReference type="SUPFAM" id="SSF57829">
    <property type="entry name" value="Zn-binding ribosomal proteins"/>
    <property type="match status" value="1"/>
</dbReference>
<evidence type="ECO:0000255" key="1">
    <source>
        <dbReference type="HAMAP-Rule" id="MF_00340"/>
    </source>
</evidence>
<evidence type="ECO:0000305" key="2"/>
<accession>C5BA64</accession>
<organism>
    <name type="scientific">Edwardsiella ictaluri (strain 93-146)</name>
    <dbReference type="NCBI Taxonomy" id="634503"/>
    <lineage>
        <taxon>Bacteria</taxon>
        <taxon>Pseudomonadati</taxon>
        <taxon>Pseudomonadota</taxon>
        <taxon>Gammaproteobacteria</taxon>
        <taxon>Enterobacterales</taxon>
        <taxon>Hafniaceae</taxon>
        <taxon>Edwardsiella</taxon>
    </lineage>
</organism>
<sequence>MAVQQNKKTRSCRGMRRSHDALTTATVSVDKVSGETHLRHHVTADGFYRGRKVIAK</sequence>
<protein>
    <recommendedName>
        <fullName evidence="1">Large ribosomal subunit protein bL32</fullName>
    </recommendedName>
    <alternativeName>
        <fullName evidence="2">50S ribosomal protein L32</fullName>
    </alternativeName>
</protein>
<name>RL32_EDWI9</name>
<comment type="similarity">
    <text evidence="1">Belongs to the bacterial ribosomal protein bL32 family.</text>
</comment>